<evidence type="ECO:0000250" key="1">
    <source>
        <dbReference type="UniProtKB" id="P32074"/>
    </source>
</evidence>
<evidence type="ECO:0000250" key="2">
    <source>
        <dbReference type="UniProtKB" id="P53620"/>
    </source>
</evidence>
<evidence type="ECO:0000250" key="3">
    <source>
        <dbReference type="UniProtKB" id="P53622"/>
    </source>
</evidence>
<evidence type="ECO:0000250" key="4">
    <source>
        <dbReference type="UniProtKB" id="Q8I0G5"/>
    </source>
</evidence>
<evidence type="ECO:0000255" key="5"/>
<evidence type="ECO:0000256" key="6">
    <source>
        <dbReference type="SAM" id="MobiDB-lite"/>
    </source>
</evidence>
<evidence type="ECO:0000312" key="7">
    <source>
        <dbReference type="EMBL" id="EAA14827.2"/>
    </source>
</evidence>
<dbReference type="EMBL" id="AAAB01008984">
    <property type="protein sequence ID" value="EAA14827.2"/>
    <property type="molecule type" value="Genomic_DNA"/>
</dbReference>
<dbReference type="RefSeq" id="XP_320089.2">
    <property type="nucleotide sequence ID" value="XM_320089.4"/>
</dbReference>
<dbReference type="SMR" id="Q7PVF6"/>
<dbReference type="FunCoup" id="Q7PVF6">
    <property type="interactions" value="2382"/>
</dbReference>
<dbReference type="STRING" id="7165.Q7PVF6"/>
<dbReference type="PaxDb" id="7165-AGAP009291-PA"/>
<dbReference type="VEuPathDB" id="VectorBase:AGAMI1_008976"/>
<dbReference type="VEuPathDB" id="VectorBase:AGAP009291"/>
<dbReference type="eggNOG" id="KOG1078">
    <property type="taxonomic scope" value="Eukaryota"/>
</dbReference>
<dbReference type="HOGENOM" id="CLU_010353_2_0_1"/>
<dbReference type="InParanoid" id="Q7PVF6"/>
<dbReference type="PhylomeDB" id="Q7PVF6"/>
<dbReference type="Proteomes" id="UP000007062">
    <property type="component" value="Chromosome 3R"/>
</dbReference>
<dbReference type="GO" id="GO:0030126">
    <property type="term" value="C:COPI vesicle coat"/>
    <property type="evidence" value="ECO:0000318"/>
    <property type="project" value="GO_Central"/>
</dbReference>
<dbReference type="GO" id="GO:0005783">
    <property type="term" value="C:endoplasmic reticulum"/>
    <property type="evidence" value="ECO:0000318"/>
    <property type="project" value="GO_Central"/>
</dbReference>
<dbReference type="GO" id="GO:0005793">
    <property type="term" value="C:endoplasmic reticulum-Golgi intermediate compartment"/>
    <property type="evidence" value="ECO:0000318"/>
    <property type="project" value="GO_Central"/>
</dbReference>
<dbReference type="GO" id="GO:0000139">
    <property type="term" value="C:Golgi membrane"/>
    <property type="evidence" value="ECO:0000318"/>
    <property type="project" value="GO_Central"/>
</dbReference>
<dbReference type="GO" id="GO:0005198">
    <property type="term" value="F:structural molecule activity"/>
    <property type="evidence" value="ECO:0007669"/>
    <property type="project" value="InterPro"/>
</dbReference>
<dbReference type="GO" id="GO:0006888">
    <property type="term" value="P:endoplasmic reticulum to Golgi vesicle-mediated transport"/>
    <property type="evidence" value="ECO:0000318"/>
    <property type="project" value="GO_Central"/>
</dbReference>
<dbReference type="GO" id="GO:0006891">
    <property type="term" value="P:intra-Golgi vesicle-mediated transport"/>
    <property type="evidence" value="ECO:0000318"/>
    <property type="project" value="GO_Central"/>
</dbReference>
<dbReference type="GO" id="GO:0006886">
    <property type="term" value="P:intracellular protein transport"/>
    <property type="evidence" value="ECO:0007669"/>
    <property type="project" value="InterPro"/>
</dbReference>
<dbReference type="GO" id="GO:0072384">
    <property type="term" value="P:organelle transport along microtubule"/>
    <property type="evidence" value="ECO:0000318"/>
    <property type="project" value="GO_Central"/>
</dbReference>
<dbReference type="GO" id="GO:0009306">
    <property type="term" value="P:protein secretion"/>
    <property type="evidence" value="ECO:0000318"/>
    <property type="project" value="GO_Central"/>
</dbReference>
<dbReference type="FunFam" id="1.25.10.10:FF:000038">
    <property type="entry name" value="Coatomer subunit gamma"/>
    <property type="match status" value="1"/>
</dbReference>
<dbReference type="FunFam" id="1.25.10.10:FF:000071">
    <property type="entry name" value="Coatomer subunit gamma"/>
    <property type="match status" value="1"/>
</dbReference>
<dbReference type="FunFam" id="2.60.40.1480:FF:000001">
    <property type="entry name" value="Coatomer subunit gamma"/>
    <property type="match status" value="1"/>
</dbReference>
<dbReference type="FunFam" id="3.30.310.10:FF:000011">
    <property type="entry name" value="Coatomer subunit gamma"/>
    <property type="match status" value="1"/>
</dbReference>
<dbReference type="Gene3D" id="2.60.40.1480">
    <property type="entry name" value="Coatomer, gamma subunit, appendage domain"/>
    <property type="match status" value="1"/>
</dbReference>
<dbReference type="Gene3D" id="1.25.10.10">
    <property type="entry name" value="Leucine-rich Repeat Variant"/>
    <property type="match status" value="1"/>
</dbReference>
<dbReference type="Gene3D" id="3.30.310.10">
    <property type="entry name" value="TATA-Binding Protein"/>
    <property type="match status" value="1"/>
</dbReference>
<dbReference type="InterPro" id="IPR011989">
    <property type="entry name" value="ARM-like"/>
</dbReference>
<dbReference type="InterPro" id="IPR016024">
    <property type="entry name" value="ARM-type_fold"/>
</dbReference>
<dbReference type="InterPro" id="IPR002553">
    <property type="entry name" value="Clathrin/coatomer_adapt-like_N"/>
</dbReference>
<dbReference type="InterPro" id="IPR013041">
    <property type="entry name" value="Clathrin_app_Ig-like_sf"/>
</dbReference>
<dbReference type="InterPro" id="IPR009028">
    <property type="entry name" value="Coatomer/calthrin_app_sub_C"/>
</dbReference>
<dbReference type="InterPro" id="IPR032154">
    <property type="entry name" value="Coatomer_g_Cpla"/>
</dbReference>
<dbReference type="InterPro" id="IPR017106">
    <property type="entry name" value="Coatomer_gsu"/>
</dbReference>
<dbReference type="InterPro" id="IPR013040">
    <property type="entry name" value="Coatomer_gsu_app_Ig-like_dom"/>
</dbReference>
<dbReference type="InterPro" id="IPR037067">
    <property type="entry name" value="Coatomer_gsu_app_sf"/>
</dbReference>
<dbReference type="InterPro" id="IPR012295">
    <property type="entry name" value="TBP_dom_sf"/>
</dbReference>
<dbReference type="PANTHER" id="PTHR10261">
    <property type="entry name" value="COATOMER SUBUNIT GAMMA"/>
    <property type="match status" value="1"/>
</dbReference>
<dbReference type="PANTHER" id="PTHR10261:SF0">
    <property type="entry name" value="COATOMER SUBUNIT GAMMA-2"/>
    <property type="match status" value="1"/>
</dbReference>
<dbReference type="Pfam" id="PF01602">
    <property type="entry name" value="Adaptin_N"/>
    <property type="match status" value="1"/>
</dbReference>
<dbReference type="Pfam" id="PF16381">
    <property type="entry name" value="Coatomer_g_Cpla"/>
    <property type="match status" value="1"/>
</dbReference>
<dbReference type="Pfam" id="PF08752">
    <property type="entry name" value="COP-gamma_platf"/>
    <property type="match status" value="1"/>
</dbReference>
<dbReference type="PIRSF" id="PIRSF037093">
    <property type="entry name" value="Coatomer_gamma_subunit"/>
    <property type="match status" value="1"/>
</dbReference>
<dbReference type="SUPFAM" id="SSF48371">
    <property type="entry name" value="ARM repeat"/>
    <property type="match status" value="1"/>
</dbReference>
<dbReference type="SUPFAM" id="SSF49348">
    <property type="entry name" value="Clathrin adaptor appendage domain"/>
    <property type="match status" value="1"/>
</dbReference>
<dbReference type="SUPFAM" id="SSF55711">
    <property type="entry name" value="Subdomain of clathrin and coatomer appendage domain"/>
    <property type="match status" value="1"/>
</dbReference>
<comment type="function">
    <text evidence="1 2 3 4">The coatomer is a cytosolic protein complex that binds to dilysine motifs and reversibly associates with Golgi non-clathrin-coated vesicles, which further mediate biosynthetic protein transport from the ER, via the Golgi up to the trans Golgi network. Coatomer complex is required for budding from Golgi membranes, and is essential for the retrograde Golgi-to-ER transport of dilysine-tagged proteins (By similarity).</text>
</comment>
<comment type="subunit">
    <text evidence="1 3">Oligomeric complex that consists of at least the alpha, beta, beta', gamma, delta, epsilon and zeta subunits.</text>
</comment>
<comment type="subcellular location">
    <subcellularLocation>
        <location evidence="1 3 4">Cytoplasm</location>
    </subcellularLocation>
    <subcellularLocation>
        <location evidence="1 3 4">Golgi apparatus membrane</location>
        <topology evidence="1 3 4">Peripheral membrane protein</topology>
        <orientation evidence="1 3 4">Cytoplasmic side</orientation>
    </subcellularLocation>
    <subcellularLocation>
        <location evidence="1 3 4">Cytoplasmic vesicle</location>
        <location evidence="1 3 4">COPI-coated vesicle membrane</location>
        <topology evidence="1 3 4">Peripheral membrane protein</topology>
        <orientation evidence="1 3 4">Cytoplasmic side</orientation>
    </subcellularLocation>
    <subcellularLocation>
        <location evidence="1 3 4">Endoplasmic reticulum</location>
    </subcellularLocation>
    <text evidence="1 3 4">The coatomer is cytoplasmic or polymerized on the cytoplasmic side of the Golgi, as well as on the vesicles/buds originating from it.</text>
</comment>
<comment type="similarity">
    <text evidence="5">Belongs to the COPG family.</text>
</comment>
<reference evidence="7" key="1">
    <citation type="journal article" date="2002" name="Science">
        <title>The genome sequence of the malaria mosquito Anopheles gambiae.</title>
        <authorList>
            <person name="Holt R.A."/>
            <person name="Subramanian G.M."/>
            <person name="Halpern A."/>
            <person name="Sutton G.G."/>
            <person name="Charlab R."/>
            <person name="Nusskern D.R."/>
            <person name="Wincker P."/>
            <person name="Clark A.G."/>
            <person name="Ribeiro J.M.C."/>
            <person name="Wides R."/>
            <person name="Salzberg S.L."/>
            <person name="Loftus B.J."/>
            <person name="Yandell M.D."/>
            <person name="Majoros W.H."/>
            <person name="Rusch D.B."/>
            <person name="Lai Z."/>
            <person name="Kraft C.L."/>
            <person name="Abril J.F."/>
            <person name="Anthouard V."/>
            <person name="Arensburger P."/>
            <person name="Atkinson P.W."/>
            <person name="Baden H."/>
            <person name="de Berardinis V."/>
            <person name="Baldwin D."/>
            <person name="Benes V."/>
            <person name="Biedler J."/>
            <person name="Blass C."/>
            <person name="Bolanos R."/>
            <person name="Boscus D."/>
            <person name="Barnstead M."/>
            <person name="Cai S."/>
            <person name="Center A."/>
            <person name="Chaturverdi K."/>
            <person name="Christophides G.K."/>
            <person name="Chrystal M.A.M."/>
            <person name="Clamp M."/>
            <person name="Cravchik A."/>
            <person name="Curwen V."/>
            <person name="Dana A."/>
            <person name="Delcher A."/>
            <person name="Dew I."/>
            <person name="Evans C.A."/>
            <person name="Flanigan M."/>
            <person name="Grundschober-Freimoser A."/>
            <person name="Friedli L."/>
            <person name="Gu Z."/>
            <person name="Guan P."/>
            <person name="Guigo R."/>
            <person name="Hillenmeyer M.E."/>
            <person name="Hladun S.L."/>
            <person name="Hogan J.R."/>
            <person name="Hong Y.S."/>
            <person name="Hoover J."/>
            <person name="Jaillon O."/>
            <person name="Ke Z."/>
            <person name="Kodira C.D."/>
            <person name="Kokoza E."/>
            <person name="Koutsos A."/>
            <person name="Letunic I."/>
            <person name="Levitsky A.A."/>
            <person name="Liang Y."/>
            <person name="Lin J.-J."/>
            <person name="Lobo N.F."/>
            <person name="Lopez J.R."/>
            <person name="Malek J.A."/>
            <person name="McIntosh T.C."/>
            <person name="Meister S."/>
            <person name="Miller J.R."/>
            <person name="Mobarry C."/>
            <person name="Mongin E."/>
            <person name="Murphy S.D."/>
            <person name="O'Brochta D.A."/>
            <person name="Pfannkoch C."/>
            <person name="Qi R."/>
            <person name="Regier M.A."/>
            <person name="Remington K."/>
            <person name="Shao H."/>
            <person name="Sharakhova M.V."/>
            <person name="Sitter C.D."/>
            <person name="Shetty J."/>
            <person name="Smith T.J."/>
            <person name="Strong R."/>
            <person name="Sun J."/>
            <person name="Thomasova D."/>
            <person name="Ton L.Q."/>
            <person name="Topalis P."/>
            <person name="Tu Z.J."/>
            <person name="Unger M.F."/>
            <person name="Walenz B."/>
            <person name="Wang A.H."/>
            <person name="Wang J."/>
            <person name="Wang M."/>
            <person name="Wang X."/>
            <person name="Woodford K.J."/>
            <person name="Wortman J.R."/>
            <person name="Wu M."/>
            <person name="Yao A."/>
            <person name="Zdobnov E.M."/>
            <person name="Zhang H."/>
            <person name="Zhao Q."/>
            <person name="Zhao S."/>
            <person name="Zhu S.C."/>
            <person name="Zhimulev I."/>
            <person name="Coluzzi M."/>
            <person name="della Torre A."/>
            <person name="Roth C.W."/>
            <person name="Louis C."/>
            <person name="Kalush F."/>
            <person name="Mural R.J."/>
            <person name="Myers E.W."/>
            <person name="Adams M.D."/>
            <person name="Smith H.O."/>
            <person name="Broder S."/>
            <person name="Gardner M.J."/>
            <person name="Fraser C.M."/>
            <person name="Birney E."/>
            <person name="Bork P."/>
            <person name="Brey P.T."/>
            <person name="Venter J.C."/>
            <person name="Weissenbach J."/>
            <person name="Kafatos F.C."/>
            <person name="Collins F.H."/>
            <person name="Hoffman S.L."/>
        </authorList>
    </citation>
    <scope>NUCLEOTIDE SEQUENCE [LARGE SCALE GENOMIC DNA]</scope>
    <source>
        <strain>PEST</strain>
    </source>
</reference>
<feature type="chain" id="PRO_0000405306" description="Coatomer subunit gamma">
    <location>
        <begin position="1"/>
        <end position="868"/>
    </location>
</feature>
<feature type="repeat" description="HEAT 1">
    <location>
        <begin position="64"/>
        <end position="101"/>
    </location>
</feature>
<feature type="repeat" description="HEAT 2">
    <location>
        <begin position="287"/>
        <end position="324"/>
    </location>
</feature>
<feature type="repeat" description="HEAT 3">
    <location>
        <begin position="326"/>
        <end position="359"/>
    </location>
</feature>
<feature type="repeat" description="HEAT 4">
    <location>
        <begin position="360"/>
        <end position="396"/>
    </location>
</feature>
<feature type="region of interest" description="Disordered" evidence="6">
    <location>
        <begin position="1"/>
        <end position="22"/>
    </location>
</feature>
<feature type="compositionally biased region" description="Basic residues" evidence="6">
    <location>
        <begin position="1"/>
        <end position="11"/>
    </location>
</feature>
<protein>
    <recommendedName>
        <fullName evidence="4">Coatomer subunit gamma</fullName>
    </recommendedName>
    <alternativeName>
        <fullName evidence="4">Gamma-coat protein</fullName>
        <shortName evidence="4">Gamma-COP</shortName>
    </alternativeName>
</protein>
<gene>
    <name evidence="4" type="primary">gammaCop</name>
    <name type="ORF">AGAP009291</name>
</gene>
<sequence length="868" mass="96561">MWRTKRGRTRRRDAGGNPWQNLEKTSVLQETRMFNETPVNARKCTHILTKILYLLNQGEVLGTREATECFFAMTKLFQSKDVVMRRMVYLGIKELSPIADDVIIVTSSLTKDMTGKEDLYRAPAIRALCSITDSTMLQAVERYMKQCIVDRNAPVSSGALVSSLHLASTAGEVVKRWANEAQEALNSDNIMVQYHGLGLLYHIRKADRLAVTKLVNKLTRQHLRSPYATCFLIRIACKIMEEEDASGNATEDSPLFNFVECCLRNKSEMVVYEAAHAVVNLKRTNPRELSTAVSILQLFCGSSKATLRFAAVRTMNKVAMLHPPAVNVCNLDLEGLIADSNRSVATLAITTLLKTGAESSVERLMKQIATFVAEISDEFKLVVVQAIRSLCTKFPRKHAVTMNFLSGMLREEGGLEYKTSIVDTIILIIEENPDAKEAGLGHLCEFIEDCEHTSLAVRILHLLGKEGPYSKCPSRYIRFIYNRVILENATVRAAAVAAIAQFGACCPDLLPNVLVLLNRCQMDCDDEVRDRATYYYTILNQSNPELNKRFIADHEIVSLPLLEKSLNEHLKGPLAERFDLSIVPKSQVIQPEVNEEVMIMNKAAPKIARVNREEVNTEKLLAIPGIHHVGALHKSCAPVQLTESETEYTVSCIKHCFAHHIVFQFDCVNTLSDQLLENVRVDLELPEGFVSRAVIPCAKLPYGDKESTYVIVQFPEDVPSSIATLGATLRFLVKDCDPATGQPDSDEGYNDEYILEDIEVTVADQMQKSKKQNFLAAWESADTEEWVEAEDTFELSSVTSLQDAVNTILKFLGLAPANLSENVPDGTFRGGVEVLVRSKLAVADGVTMQLTVRSTDMDVAELITSAVG</sequence>
<accession>Q7PVF6</accession>
<proteinExistence type="inferred from homology"/>
<keyword id="KW-0963">Cytoplasm</keyword>
<keyword id="KW-0968">Cytoplasmic vesicle</keyword>
<keyword id="KW-0256">Endoplasmic reticulum</keyword>
<keyword id="KW-0931">ER-Golgi transport</keyword>
<keyword id="KW-0333">Golgi apparatus</keyword>
<keyword id="KW-0472">Membrane</keyword>
<keyword id="KW-0653">Protein transport</keyword>
<keyword id="KW-1185">Reference proteome</keyword>
<keyword id="KW-0677">Repeat</keyword>
<keyword id="KW-0813">Transport</keyword>
<organism>
    <name type="scientific">Anopheles gambiae</name>
    <name type="common">African malaria mosquito</name>
    <dbReference type="NCBI Taxonomy" id="7165"/>
    <lineage>
        <taxon>Eukaryota</taxon>
        <taxon>Metazoa</taxon>
        <taxon>Ecdysozoa</taxon>
        <taxon>Arthropoda</taxon>
        <taxon>Hexapoda</taxon>
        <taxon>Insecta</taxon>
        <taxon>Pterygota</taxon>
        <taxon>Neoptera</taxon>
        <taxon>Endopterygota</taxon>
        <taxon>Diptera</taxon>
        <taxon>Nematocera</taxon>
        <taxon>Culicoidea</taxon>
        <taxon>Culicidae</taxon>
        <taxon>Anophelinae</taxon>
        <taxon>Anopheles</taxon>
    </lineage>
</organism>
<name>COPG_ANOGA</name>